<gene>
    <name type="primary">Ephb4</name>
    <name type="synonym">Htk</name>
    <name type="synonym">Mdk2</name>
    <name type="synonym">Myk1</name>
</gene>
<proteinExistence type="evidence at protein level"/>
<evidence type="ECO:0000250" key="1"/>
<evidence type="ECO:0000250" key="2">
    <source>
        <dbReference type="UniProtKB" id="P54760"/>
    </source>
</evidence>
<evidence type="ECO:0000255" key="3"/>
<evidence type="ECO:0000255" key="4">
    <source>
        <dbReference type="PROSITE-ProRule" id="PRU00159"/>
    </source>
</evidence>
<evidence type="ECO:0000255" key="5">
    <source>
        <dbReference type="PROSITE-ProRule" id="PRU00184"/>
    </source>
</evidence>
<evidence type="ECO:0000255" key="6">
    <source>
        <dbReference type="PROSITE-ProRule" id="PRU00316"/>
    </source>
</evidence>
<evidence type="ECO:0000255" key="7">
    <source>
        <dbReference type="PROSITE-ProRule" id="PRU00883"/>
    </source>
</evidence>
<evidence type="ECO:0000255" key="8">
    <source>
        <dbReference type="PROSITE-ProRule" id="PRU10028"/>
    </source>
</evidence>
<evidence type="ECO:0000256" key="9">
    <source>
        <dbReference type="SAM" id="MobiDB-lite"/>
    </source>
</evidence>
<evidence type="ECO:0000269" key="10">
    <source>
    </source>
</evidence>
<evidence type="ECO:0000269" key="11">
    <source>
    </source>
</evidence>
<evidence type="ECO:0000269" key="12">
    <source>
    </source>
</evidence>
<evidence type="ECO:0000269" key="13">
    <source>
    </source>
</evidence>
<evidence type="ECO:0000269" key="14">
    <source>
    </source>
</evidence>
<evidence type="ECO:0000269" key="15">
    <source>
    </source>
</evidence>
<evidence type="ECO:0000305" key="16"/>
<organism>
    <name type="scientific">Mus musculus</name>
    <name type="common">Mouse</name>
    <dbReference type="NCBI Taxonomy" id="10090"/>
    <lineage>
        <taxon>Eukaryota</taxon>
        <taxon>Metazoa</taxon>
        <taxon>Chordata</taxon>
        <taxon>Craniata</taxon>
        <taxon>Vertebrata</taxon>
        <taxon>Euteleostomi</taxon>
        <taxon>Mammalia</taxon>
        <taxon>Eutheria</taxon>
        <taxon>Euarchontoglires</taxon>
        <taxon>Glires</taxon>
        <taxon>Rodentia</taxon>
        <taxon>Myomorpha</taxon>
        <taxon>Muroidea</taxon>
        <taxon>Muridae</taxon>
        <taxon>Murinae</taxon>
        <taxon>Mus</taxon>
        <taxon>Mus</taxon>
    </lineage>
</organism>
<comment type="function">
    <text evidence="10">Receptor tyrosine kinase which binds promiscuously transmembrane ephrin-B family ligands residing on adjacent cells, leading to contact-dependent bidirectional signaling into neighboring cells. The signaling pathway downstream of the receptor is referred to as forward signaling while the signaling pathway downstream of the ephrin ligand is referred to as reverse signaling. Together with its cognate ligand/functional ligand EFNB2 it is involved in the regulation of cell adhesion and migration, and plays a central role in heart morphogenesis, angiogenesis and blood vessel remodeling and permeability. EPHB4-mediated forward signaling controls cellular repulsion and segregation from EFNB2-expressing cells.</text>
</comment>
<comment type="catalytic activity">
    <reaction evidence="8">
        <text>L-tyrosyl-[protein] + ATP = O-phospho-L-tyrosyl-[protein] + ADP + H(+)</text>
        <dbReference type="Rhea" id="RHEA:10596"/>
        <dbReference type="Rhea" id="RHEA-COMP:10136"/>
        <dbReference type="Rhea" id="RHEA-COMP:20101"/>
        <dbReference type="ChEBI" id="CHEBI:15378"/>
        <dbReference type="ChEBI" id="CHEBI:30616"/>
        <dbReference type="ChEBI" id="CHEBI:46858"/>
        <dbReference type="ChEBI" id="CHEBI:61978"/>
        <dbReference type="ChEBI" id="CHEBI:456216"/>
        <dbReference type="EC" id="2.7.10.1"/>
    </reaction>
</comment>
<comment type="subunit">
    <text evidence="2">Heterotetramer upon binding of the ligand. The heterotetramer is composed of an ephrin dimer and a receptor dimer. Oligomerization is probably required to induce biological responses (By similarity). Interacts with RASA1; the interaction depends on EPHB4 tyrosine-phosphorylation (By similarity).</text>
</comment>
<comment type="subcellular location">
    <subcellularLocation>
        <location evidence="2">Cell membrane</location>
        <topology evidence="2">Single-pass type I membrane protein</topology>
    </subcellularLocation>
</comment>
<comment type="tissue specificity">
    <text evidence="14 15">Expressed in various organ systems, including lung, liver, kidney, intestine, muscle and heart (PubMed:7478528). Expressed in myogenic progenitor cells (PubMed:27446912).</text>
</comment>
<comment type="developmental stage">
    <text evidence="10 14">Specifically expressed in the developing cardiovascular system with higher expression in veins. First detected in the developing anterior cardinal vein at 8.75 dpc. Abundant expression at 16.5 dpc in various organ systems, including thymus, heart, lung and kidney, where it is associated with cells of endothelial origin. In myogenic progenitor cells, highly expressed during early development (11.5 dpc) and progressively repressed as developments proceeds (PubMed:27446912).</text>
</comment>
<comment type="PTM">
    <text evidence="1">Phosphorylated; autophosphorylation is stimulated by EFNB2.</text>
</comment>
<comment type="disruption phenotype">
    <text evidence="10 13">Embryo display cardiovascular defects and lethality with very high penetrance. Growth retardation is observed at 9.5 dpc with arrested heart development and lack of blood flow. By 10.5 dpc degeneration and necrosis are apparent throughout the embryo. Conditional lymphovenous valves knockouts show a complete loss of lymphatic valves (PubMed:27400125).</text>
</comment>
<comment type="similarity">
    <text evidence="4">Belongs to the protein kinase superfamily. Tyr protein kinase family. Ephrin receptor subfamily.</text>
</comment>
<accession>P54761</accession>
<accession>Q60627</accession>
<accession>Q99MR2</accession>
<protein>
    <recommendedName>
        <fullName>Ephrin type-B receptor 4</fullName>
        <ecNumber>2.7.10.1</ecNumber>
    </recommendedName>
    <alternativeName>
        <fullName>Developmental kinase 2</fullName>
        <shortName>mDK-2</shortName>
    </alternativeName>
    <alternativeName>
        <fullName>Hepatoma transmembrane kinase</fullName>
    </alternativeName>
    <alternativeName>
        <fullName>Tyrosine kinase MYK-1</fullName>
    </alternativeName>
</protein>
<keyword id="KW-0037">Angiogenesis</keyword>
<keyword id="KW-0067">ATP-binding</keyword>
<keyword id="KW-1003">Cell membrane</keyword>
<keyword id="KW-0217">Developmental protein</keyword>
<keyword id="KW-1015">Disulfide bond</keyword>
<keyword id="KW-0325">Glycoprotein</keyword>
<keyword id="KW-0418">Kinase</keyword>
<keyword id="KW-0472">Membrane</keyword>
<keyword id="KW-0547">Nucleotide-binding</keyword>
<keyword id="KW-0597">Phosphoprotein</keyword>
<keyword id="KW-0675">Receptor</keyword>
<keyword id="KW-1185">Reference proteome</keyword>
<keyword id="KW-0677">Repeat</keyword>
<keyword id="KW-0732">Signal</keyword>
<keyword id="KW-0808">Transferase</keyword>
<keyword id="KW-0812">Transmembrane</keyword>
<keyword id="KW-1133">Transmembrane helix</keyword>
<keyword id="KW-0829">Tyrosine-protein kinase</keyword>
<dbReference type="EC" id="2.7.10.1"/>
<dbReference type="EMBL" id="Z49085">
    <property type="protein sequence ID" value="CAA88909.1"/>
    <property type="molecule type" value="mRNA"/>
</dbReference>
<dbReference type="EMBL" id="U06834">
    <property type="protein sequence ID" value="AAA18591.1"/>
    <property type="molecule type" value="mRNA"/>
</dbReference>
<dbReference type="EMBL" id="AF312033">
    <property type="protein sequence ID" value="AAK28823.1"/>
    <property type="molecule type" value="Genomic_DNA"/>
</dbReference>
<dbReference type="EMBL" id="CH466529">
    <property type="protein sequence ID" value="EDL19273.1"/>
    <property type="molecule type" value="Genomic_DNA"/>
</dbReference>
<dbReference type="EMBL" id="CH466529">
    <property type="protein sequence ID" value="EDL19275.1"/>
    <property type="molecule type" value="Genomic_DNA"/>
</dbReference>
<dbReference type="CCDS" id="CCDS19767.1"/>
<dbReference type="PIR" id="I48652">
    <property type="entry name" value="I48652"/>
</dbReference>
<dbReference type="PIR" id="I48953">
    <property type="entry name" value="I48953"/>
</dbReference>
<dbReference type="RefSeq" id="NP_034274.4">
    <property type="nucleotide sequence ID" value="NM_010144.6"/>
</dbReference>
<dbReference type="SMR" id="P54761"/>
<dbReference type="BioGRID" id="199478">
    <property type="interactions" value="7"/>
</dbReference>
<dbReference type="FunCoup" id="P54761">
    <property type="interactions" value="508"/>
</dbReference>
<dbReference type="STRING" id="10090.ENSMUSP00000106684"/>
<dbReference type="BindingDB" id="P54761"/>
<dbReference type="ChEMBL" id="CHEMBL4739680"/>
<dbReference type="GuidetoPHARMACOLOGY" id="1833"/>
<dbReference type="GlyCosmos" id="P54761">
    <property type="glycosylation" value="3 sites, No reported glycans"/>
</dbReference>
<dbReference type="GlyGen" id="P54761">
    <property type="glycosylation" value="3 sites, 2 N-linked glycans (2 sites)"/>
</dbReference>
<dbReference type="iPTMnet" id="P54761"/>
<dbReference type="PhosphoSitePlus" id="P54761"/>
<dbReference type="SwissPalm" id="P54761"/>
<dbReference type="PaxDb" id="10090-ENSMUSP00000106684"/>
<dbReference type="ProteomicsDB" id="275531"/>
<dbReference type="Pumba" id="P54761"/>
<dbReference type="ABCD" id="P54761">
    <property type="antibodies" value="28 sequenced antibodies"/>
</dbReference>
<dbReference type="Antibodypedia" id="4623">
    <property type="antibodies" value="751 antibodies from 42 providers"/>
</dbReference>
<dbReference type="DNASU" id="13846"/>
<dbReference type="Ensembl" id="ENSMUST00000061244.15">
    <property type="protein sequence ID" value="ENSMUSP00000051622.9"/>
    <property type="gene ID" value="ENSMUSG00000029710.16"/>
</dbReference>
<dbReference type="Ensembl" id="ENSMUST00000144296.8">
    <property type="protein sequence ID" value="ENSMUSP00000115731.2"/>
    <property type="gene ID" value="ENSMUSG00000029710.16"/>
</dbReference>
<dbReference type="Ensembl" id="ENSMUST00000166239.8">
    <property type="protein sequence ID" value="ENSMUSP00000130275.2"/>
    <property type="gene ID" value="ENSMUSG00000029710.16"/>
</dbReference>
<dbReference type="GeneID" id="13846"/>
<dbReference type="KEGG" id="mmu:13846"/>
<dbReference type="UCSC" id="uc009aci.2">
    <property type="organism name" value="mouse"/>
</dbReference>
<dbReference type="AGR" id="MGI:104757"/>
<dbReference type="CTD" id="2050"/>
<dbReference type="MGI" id="MGI:104757">
    <property type="gene designation" value="Ephb4"/>
</dbReference>
<dbReference type="VEuPathDB" id="HostDB:ENSMUSG00000029710"/>
<dbReference type="eggNOG" id="KOG0196">
    <property type="taxonomic scope" value="Eukaryota"/>
</dbReference>
<dbReference type="GeneTree" id="ENSGT00940000160057"/>
<dbReference type="InParanoid" id="P54761"/>
<dbReference type="OMA" id="STKCRAC"/>
<dbReference type="OrthoDB" id="4062651at2759"/>
<dbReference type="BRENDA" id="2.7.10.1">
    <property type="organism ID" value="3474"/>
</dbReference>
<dbReference type="Reactome" id="R-MMU-2682334">
    <property type="pathway name" value="EPH-Ephrin signaling"/>
</dbReference>
<dbReference type="Reactome" id="R-MMU-3928662">
    <property type="pathway name" value="EPHB-mediated forward signaling"/>
</dbReference>
<dbReference type="Reactome" id="R-MMU-3928664">
    <property type="pathway name" value="Ephrin signaling"/>
</dbReference>
<dbReference type="Reactome" id="R-MMU-3928665">
    <property type="pathway name" value="EPH-ephrin mediated repulsion of cells"/>
</dbReference>
<dbReference type="BioGRID-ORCS" id="13846">
    <property type="hits" value="2 hits in 83 CRISPR screens"/>
</dbReference>
<dbReference type="ChiTaRS" id="Ephb4">
    <property type="organism name" value="mouse"/>
</dbReference>
<dbReference type="PRO" id="PR:P54761"/>
<dbReference type="Proteomes" id="UP000000589">
    <property type="component" value="Chromosome 5"/>
</dbReference>
<dbReference type="RNAct" id="P54761">
    <property type="molecule type" value="protein"/>
</dbReference>
<dbReference type="Bgee" id="ENSMUSG00000029710">
    <property type="expression patterns" value="Expressed in embryonic post-anal tail and 210 other cell types or tissues"/>
</dbReference>
<dbReference type="ExpressionAtlas" id="P54761">
    <property type="expression patterns" value="baseline and differential"/>
</dbReference>
<dbReference type="GO" id="GO:0005886">
    <property type="term" value="C:plasma membrane"/>
    <property type="evidence" value="ECO:0000250"/>
    <property type="project" value="UniProtKB"/>
</dbReference>
<dbReference type="GO" id="GO:0005524">
    <property type="term" value="F:ATP binding"/>
    <property type="evidence" value="ECO:0007669"/>
    <property type="project" value="UniProtKB-KW"/>
</dbReference>
<dbReference type="GO" id="GO:0005003">
    <property type="term" value="F:ephrin receptor activity"/>
    <property type="evidence" value="ECO:0000250"/>
    <property type="project" value="UniProtKB"/>
</dbReference>
<dbReference type="GO" id="GO:0004714">
    <property type="term" value="F:transmembrane receptor protein tyrosine kinase activity"/>
    <property type="evidence" value="ECO:0000250"/>
    <property type="project" value="UniProtKB"/>
</dbReference>
<dbReference type="GO" id="GO:0001525">
    <property type="term" value="P:angiogenesis"/>
    <property type="evidence" value="ECO:0000315"/>
    <property type="project" value="UniProtKB"/>
</dbReference>
<dbReference type="GO" id="GO:0007155">
    <property type="term" value="P:cell adhesion"/>
    <property type="evidence" value="ECO:0000250"/>
    <property type="project" value="UniProtKB"/>
</dbReference>
<dbReference type="GO" id="GO:0002042">
    <property type="term" value="P:cell migration involved in sprouting angiogenesis"/>
    <property type="evidence" value="ECO:0000250"/>
    <property type="project" value="UniProtKB"/>
</dbReference>
<dbReference type="GO" id="GO:0048013">
    <property type="term" value="P:ephrin receptor signaling pathway"/>
    <property type="evidence" value="ECO:0000316"/>
    <property type="project" value="UniProtKB"/>
</dbReference>
<dbReference type="GO" id="GO:0003007">
    <property type="term" value="P:heart morphogenesis"/>
    <property type="evidence" value="ECO:0000315"/>
    <property type="project" value="UniProtKB"/>
</dbReference>
<dbReference type="GO" id="GO:1903849">
    <property type="term" value="P:positive regulation of aorta morphogenesis"/>
    <property type="evidence" value="ECO:0000315"/>
    <property type="project" value="MGI"/>
</dbReference>
<dbReference type="GO" id="GO:2000525">
    <property type="term" value="P:positive regulation of T cell costimulation"/>
    <property type="evidence" value="ECO:0000316"/>
    <property type="project" value="MGI"/>
</dbReference>
<dbReference type="GO" id="GO:0046777">
    <property type="term" value="P:protein autophosphorylation"/>
    <property type="evidence" value="ECO:0000250"/>
    <property type="project" value="UniProtKB"/>
</dbReference>
<dbReference type="GO" id="GO:0048845">
    <property type="term" value="P:venous blood vessel morphogenesis"/>
    <property type="evidence" value="ECO:0000315"/>
    <property type="project" value="MGI"/>
</dbReference>
<dbReference type="CDD" id="cd10474">
    <property type="entry name" value="EphR_LBD_B4"/>
    <property type="match status" value="1"/>
</dbReference>
<dbReference type="CDD" id="cd00063">
    <property type="entry name" value="FN3"/>
    <property type="match status" value="2"/>
</dbReference>
<dbReference type="CDD" id="cd05065">
    <property type="entry name" value="PTKc_EphR_B"/>
    <property type="match status" value="1"/>
</dbReference>
<dbReference type="CDD" id="cd09554">
    <property type="entry name" value="SAM_EPH-B4"/>
    <property type="match status" value="1"/>
</dbReference>
<dbReference type="FunFam" id="1.10.150.50:FF:000001">
    <property type="entry name" value="Ephrin type-A receptor 5"/>
    <property type="match status" value="1"/>
</dbReference>
<dbReference type="FunFam" id="2.10.50.10:FF:000001">
    <property type="entry name" value="Ephrin type-A receptor 5"/>
    <property type="match status" value="1"/>
</dbReference>
<dbReference type="FunFam" id="3.30.200.20:FF:000001">
    <property type="entry name" value="Ephrin type-A receptor 5"/>
    <property type="match status" value="1"/>
</dbReference>
<dbReference type="FunFam" id="2.60.40.10:FF:000059">
    <property type="entry name" value="Ephrin type-A receptor 6"/>
    <property type="match status" value="1"/>
</dbReference>
<dbReference type="FunFam" id="1.10.510.10:FF:000015">
    <property type="entry name" value="Ephrin type-B receptor 2"/>
    <property type="match status" value="1"/>
</dbReference>
<dbReference type="FunFam" id="2.60.120.260:FF:000071">
    <property type="entry name" value="Ephrin type-B receptor 4"/>
    <property type="match status" value="1"/>
</dbReference>
<dbReference type="FunFam" id="2.60.40.10:FF:000787">
    <property type="entry name" value="ephrin type-B receptor 4"/>
    <property type="match status" value="1"/>
</dbReference>
<dbReference type="FunFam" id="2.60.40.1770:FF:000003">
    <property type="entry name" value="ephrin type-B receptor 4"/>
    <property type="match status" value="1"/>
</dbReference>
<dbReference type="Gene3D" id="2.60.40.1770">
    <property type="entry name" value="ephrin a2 ectodomain"/>
    <property type="match status" value="1"/>
</dbReference>
<dbReference type="Gene3D" id="2.60.120.260">
    <property type="entry name" value="Galactose-binding domain-like"/>
    <property type="match status" value="1"/>
</dbReference>
<dbReference type="Gene3D" id="2.60.40.10">
    <property type="entry name" value="Immunoglobulins"/>
    <property type="match status" value="2"/>
</dbReference>
<dbReference type="Gene3D" id="3.30.200.20">
    <property type="entry name" value="Phosphorylase Kinase, domain 1"/>
    <property type="match status" value="1"/>
</dbReference>
<dbReference type="Gene3D" id="1.10.150.50">
    <property type="entry name" value="Transcription Factor, Ets-1"/>
    <property type="match status" value="1"/>
</dbReference>
<dbReference type="Gene3D" id="1.10.510.10">
    <property type="entry name" value="Transferase(Phosphotransferase) domain 1"/>
    <property type="match status" value="1"/>
</dbReference>
<dbReference type="Gene3D" id="2.10.50.10">
    <property type="entry name" value="Tumor Necrosis Factor Receptor, subunit A, domain 2"/>
    <property type="match status" value="1"/>
</dbReference>
<dbReference type="InterPro" id="IPR037636">
    <property type="entry name" value="EPH-B4_SAM"/>
</dbReference>
<dbReference type="InterPro" id="IPR027936">
    <property type="entry name" value="Eph_TM"/>
</dbReference>
<dbReference type="InterPro" id="IPR034290">
    <property type="entry name" value="EphB4_rcpt_lig-bd"/>
</dbReference>
<dbReference type="InterPro" id="IPR001090">
    <property type="entry name" value="Ephrin_rcpt_lig-bd_dom"/>
</dbReference>
<dbReference type="InterPro" id="IPR050449">
    <property type="entry name" value="Ephrin_rcpt_TKs"/>
</dbReference>
<dbReference type="InterPro" id="IPR003961">
    <property type="entry name" value="FN3_dom"/>
</dbReference>
<dbReference type="InterPro" id="IPR036116">
    <property type="entry name" value="FN3_sf"/>
</dbReference>
<dbReference type="InterPro" id="IPR008979">
    <property type="entry name" value="Galactose-bd-like_sf"/>
</dbReference>
<dbReference type="InterPro" id="IPR009030">
    <property type="entry name" value="Growth_fac_rcpt_cys_sf"/>
</dbReference>
<dbReference type="InterPro" id="IPR013783">
    <property type="entry name" value="Ig-like_fold"/>
</dbReference>
<dbReference type="InterPro" id="IPR011009">
    <property type="entry name" value="Kinase-like_dom_sf"/>
</dbReference>
<dbReference type="InterPro" id="IPR000719">
    <property type="entry name" value="Prot_kinase_dom"/>
</dbReference>
<dbReference type="InterPro" id="IPR017441">
    <property type="entry name" value="Protein_kinase_ATP_BS"/>
</dbReference>
<dbReference type="InterPro" id="IPR001660">
    <property type="entry name" value="SAM"/>
</dbReference>
<dbReference type="InterPro" id="IPR013761">
    <property type="entry name" value="SAM/pointed_sf"/>
</dbReference>
<dbReference type="InterPro" id="IPR001245">
    <property type="entry name" value="Ser-Thr/Tyr_kinase_cat_dom"/>
</dbReference>
<dbReference type="InterPro" id="IPR011641">
    <property type="entry name" value="Tyr-kin_ephrin_A/B_rcpt-like"/>
</dbReference>
<dbReference type="InterPro" id="IPR008266">
    <property type="entry name" value="Tyr_kinase_AS"/>
</dbReference>
<dbReference type="InterPro" id="IPR020635">
    <property type="entry name" value="Tyr_kinase_cat_dom"/>
</dbReference>
<dbReference type="InterPro" id="IPR016257">
    <property type="entry name" value="Tyr_kinase_ephrin_rcpt"/>
</dbReference>
<dbReference type="InterPro" id="IPR001426">
    <property type="entry name" value="Tyr_kinase_rcpt_V_CS"/>
</dbReference>
<dbReference type="PANTHER" id="PTHR46877">
    <property type="entry name" value="EPH RECEPTOR A5"/>
    <property type="match status" value="1"/>
</dbReference>
<dbReference type="PANTHER" id="PTHR46877:SF19">
    <property type="entry name" value="RECEPTOR PROTEIN-TYROSINE KINASE"/>
    <property type="match status" value="1"/>
</dbReference>
<dbReference type="Pfam" id="PF14575">
    <property type="entry name" value="EphA2_TM"/>
    <property type="match status" value="1"/>
</dbReference>
<dbReference type="Pfam" id="PF01404">
    <property type="entry name" value="Ephrin_lbd"/>
    <property type="match status" value="1"/>
</dbReference>
<dbReference type="Pfam" id="PF07699">
    <property type="entry name" value="Ephrin_rec_like"/>
    <property type="match status" value="1"/>
</dbReference>
<dbReference type="Pfam" id="PF00041">
    <property type="entry name" value="fn3"/>
    <property type="match status" value="2"/>
</dbReference>
<dbReference type="Pfam" id="PF07714">
    <property type="entry name" value="PK_Tyr_Ser-Thr"/>
    <property type="match status" value="1"/>
</dbReference>
<dbReference type="Pfam" id="PF00536">
    <property type="entry name" value="SAM_1"/>
    <property type="match status" value="1"/>
</dbReference>
<dbReference type="PIRSF" id="PIRSF000666">
    <property type="entry name" value="TyrPK_ephrin_receptor"/>
    <property type="match status" value="1"/>
</dbReference>
<dbReference type="PRINTS" id="PR00109">
    <property type="entry name" value="TYRKINASE"/>
</dbReference>
<dbReference type="SMART" id="SM00615">
    <property type="entry name" value="EPH_lbd"/>
    <property type="match status" value="1"/>
</dbReference>
<dbReference type="SMART" id="SM01411">
    <property type="entry name" value="Ephrin_rec_like"/>
    <property type="match status" value="1"/>
</dbReference>
<dbReference type="SMART" id="SM00060">
    <property type="entry name" value="FN3"/>
    <property type="match status" value="2"/>
</dbReference>
<dbReference type="SMART" id="SM00454">
    <property type="entry name" value="SAM"/>
    <property type="match status" value="1"/>
</dbReference>
<dbReference type="SMART" id="SM00219">
    <property type="entry name" value="TyrKc"/>
    <property type="match status" value="1"/>
</dbReference>
<dbReference type="SUPFAM" id="SSF49265">
    <property type="entry name" value="Fibronectin type III"/>
    <property type="match status" value="1"/>
</dbReference>
<dbReference type="SUPFAM" id="SSF49785">
    <property type="entry name" value="Galactose-binding domain-like"/>
    <property type="match status" value="1"/>
</dbReference>
<dbReference type="SUPFAM" id="SSF57184">
    <property type="entry name" value="Growth factor receptor domain"/>
    <property type="match status" value="1"/>
</dbReference>
<dbReference type="SUPFAM" id="SSF56112">
    <property type="entry name" value="Protein kinase-like (PK-like)"/>
    <property type="match status" value="1"/>
</dbReference>
<dbReference type="SUPFAM" id="SSF47769">
    <property type="entry name" value="SAM/Pointed domain"/>
    <property type="match status" value="1"/>
</dbReference>
<dbReference type="PROSITE" id="PS01186">
    <property type="entry name" value="EGF_2"/>
    <property type="match status" value="1"/>
</dbReference>
<dbReference type="PROSITE" id="PS51550">
    <property type="entry name" value="EPH_LBD"/>
    <property type="match status" value="1"/>
</dbReference>
<dbReference type="PROSITE" id="PS50853">
    <property type="entry name" value="FN3"/>
    <property type="match status" value="2"/>
</dbReference>
<dbReference type="PROSITE" id="PS00107">
    <property type="entry name" value="PROTEIN_KINASE_ATP"/>
    <property type="match status" value="1"/>
</dbReference>
<dbReference type="PROSITE" id="PS50011">
    <property type="entry name" value="PROTEIN_KINASE_DOM"/>
    <property type="match status" value="1"/>
</dbReference>
<dbReference type="PROSITE" id="PS00109">
    <property type="entry name" value="PROTEIN_KINASE_TYR"/>
    <property type="match status" value="1"/>
</dbReference>
<dbReference type="PROSITE" id="PS00790">
    <property type="entry name" value="RECEPTOR_TYR_KIN_V_1"/>
    <property type="match status" value="1"/>
</dbReference>
<dbReference type="PROSITE" id="PS00791">
    <property type="entry name" value="RECEPTOR_TYR_KIN_V_2"/>
    <property type="match status" value="1"/>
</dbReference>
<dbReference type="PROSITE" id="PS50105">
    <property type="entry name" value="SAM_DOMAIN"/>
    <property type="match status" value="1"/>
</dbReference>
<name>EPHB4_MOUSE</name>
<reference key="1">
    <citation type="journal article" date="1995" name="Oncogene">
        <title>Cloning, characterization, and differential expression of MDK2 and MDK5, two novel receptor tyrosine kinases of the eck/eph family.</title>
        <authorList>
            <person name="Ciossek T."/>
            <person name="Lerch M.M."/>
            <person name="Ullrich A."/>
        </authorList>
    </citation>
    <scope>NUCLEOTIDE SEQUENCE [MRNA]</scope>
    <scope>TISSUE SPECIFICITY</scope>
    <source>
        <strain>BALB/cJ</strain>
        <tissue>Kidney</tissue>
    </source>
</reference>
<reference key="2">
    <citation type="journal article" date="1994" name="Oncogene">
        <title>Expression of two novel eph-related receptor protein tyrosine kinases in mammary gland development and carcinogenesis.</title>
        <authorList>
            <person name="Andres A.-C."/>
            <person name="Reid H.H."/>
            <person name="Zurcher G."/>
            <person name="Blaschke R.J."/>
            <person name="Albrecht D."/>
            <person name="Ziemiecki A."/>
        </authorList>
    </citation>
    <scope>NUCLEOTIDE SEQUENCE [MRNA]</scope>
    <source>
        <strain>BALB/cJ</strain>
        <tissue>Lung</tissue>
    </source>
</reference>
<reference key="3">
    <citation type="journal article" date="2001" name="Nucleic Acids Res.">
        <title>Comparative analysis of the gene-dense ACHE/TFR2 region on human chromosome 7q22 with the orthologous region on mouse chromosome 5.</title>
        <authorList>
            <person name="Wilson M.D."/>
            <person name="Riemer C."/>
            <person name="Martindale D.W."/>
            <person name="Schnupf P."/>
            <person name="Boright A.P."/>
            <person name="Cheung T.L."/>
            <person name="Hardy D.M."/>
            <person name="Schwartz S."/>
            <person name="Scherer S.W."/>
            <person name="Tsui L.-C."/>
            <person name="Miller W."/>
            <person name="Koop B.F."/>
        </authorList>
    </citation>
    <scope>NUCLEOTIDE SEQUENCE [GENOMIC DNA]</scope>
</reference>
<reference key="4">
    <citation type="submission" date="2005-09" db="EMBL/GenBank/DDBJ databases">
        <authorList>
            <person name="Mural R.J."/>
            <person name="Adams M.D."/>
            <person name="Myers E.W."/>
            <person name="Smith H.O."/>
            <person name="Venter J.C."/>
        </authorList>
    </citation>
    <scope>NUCLEOTIDE SEQUENCE [LARGE SCALE GENOMIC DNA]</scope>
</reference>
<reference key="5">
    <citation type="journal article" date="1999" name="Mol. Cell">
        <title>Symmetrical mutant phenotypes of the receptor EphB4 and its specific transmembrane ligand ephrin-B2 in cardiovascular development.</title>
        <authorList>
            <person name="Gerety S.S."/>
            <person name="Wang H.U."/>
            <person name="Chen Z.F."/>
            <person name="Anderson D.J."/>
        </authorList>
    </citation>
    <scope>DISRUPTION PHENOTYPE</scope>
    <scope>FUNCTION IN ANGIOGENESIS</scope>
    <scope>DEVELOPMENTAL STAGE</scope>
</reference>
<reference key="6">
    <citation type="journal article" date="2009" name="Mol. Cell. Proteomics">
        <title>The mouse C2C12 myoblast cell surface N-linked glycoproteome: identification, glycosite occupancy, and membrane orientation.</title>
        <authorList>
            <person name="Gundry R.L."/>
            <person name="Raginski K."/>
            <person name="Tarasova Y."/>
            <person name="Tchernyshyov I."/>
            <person name="Bausch-Fluck D."/>
            <person name="Elliott S.T."/>
            <person name="Boheler K.R."/>
            <person name="Van Eyk J.E."/>
            <person name="Wollscheid B."/>
        </authorList>
    </citation>
    <scope>GLYCOSYLATION [LARGE SCALE ANALYSIS] AT ASN-335</scope>
    <source>
        <tissue>Myoblast</tissue>
    </source>
</reference>
<reference key="7">
    <citation type="journal article" date="2009" name="Nat. Biotechnol.">
        <title>Mass-spectrometric identification and relative quantification of N-linked cell surface glycoproteins.</title>
        <authorList>
            <person name="Wollscheid B."/>
            <person name="Bausch-Fluck D."/>
            <person name="Henderson C."/>
            <person name="O'Brien R."/>
            <person name="Bibel M."/>
            <person name="Schiess R."/>
            <person name="Aebersold R."/>
            <person name="Watts J.D."/>
        </authorList>
    </citation>
    <scope>GLYCOSYLATION [LARGE SCALE ANALYSIS] AT ASN-335</scope>
</reference>
<reference key="8">
    <citation type="journal article" date="2010" name="Cell">
        <title>A tissue-specific atlas of mouse protein phosphorylation and expression.</title>
        <authorList>
            <person name="Huttlin E.L."/>
            <person name="Jedrychowski M.P."/>
            <person name="Elias J.E."/>
            <person name="Goswami T."/>
            <person name="Rad R."/>
            <person name="Beausoleil S.A."/>
            <person name="Villen J."/>
            <person name="Haas W."/>
            <person name="Sowa M.E."/>
            <person name="Gygi S.P."/>
        </authorList>
    </citation>
    <scope>IDENTIFICATION BY MASS SPECTROMETRY [LARGE SCALE ANALYSIS]</scope>
    <source>
        <tissue>Heart</tissue>
        <tissue>Kidney</tissue>
        <tissue>Liver</tissue>
        <tissue>Lung</tissue>
    </source>
</reference>
<reference key="9">
    <citation type="journal article" date="2016" name="Front. Cell Dev. Biol.">
        <title>Gene expression profiling of muscle stem cells identifies novel regulators of postnatal myogenesis.</title>
        <authorList>
            <person name="Alonso-Martin S."/>
            <person name="Rochat A."/>
            <person name="Mademtzoglou D."/>
            <person name="Morais J."/>
            <person name="de Reynies A."/>
            <person name="Aurade F."/>
            <person name="Chang T.H."/>
            <person name="Zammit P.S."/>
            <person name="Relaix F."/>
        </authorList>
    </citation>
    <scope>DEVELOPMENTAL STAGE</scope>
    <scope>TISSUE SPECIFICITY</scope>
</reference>
<reference key="10">
    <citation type="journal article" date="2016" name="J. Clin. Invest.">
        <title>EPHB4 kinase-inactivating mutations cause autosomal dominant lymphatic-related hydrops fetalis.</title>
        <authorList>
            <person name="Martin-Almedina S."/>
            <person name="Martinez-Corral I."/>
            <person name="Holdhus R."/>
            <person name="Vicente A."/>
            <person name="Fotiou E."/>
            <person name="Lin S."/>
            <person name="Petersen K."/>
            <person name="Simpson M.A."/>
            <person name="Hoischen A."/>
            <person name="Gilissen C."/>
            <person name="Jeffery H."/>
            <person name="Atton G."/>
            <person name="Karapouliou C."/>
            <person name="Brice G."/>
            <person name="Gordon K."/>
            <person name="Wiseman J.W."/>
            <person name="Wedin M."/>
            <person name="Rockson S.G."/>
            <person name="Jeffery S."/>
            <person name="Mortimer P.S."/>
            <person name="Snyder M.P."/>
            <person name="Berland S."/>
            <person name="Mansour S."/>
            <person name="Makinen T."/>
            <person name="Ostergaard P."/>
        </authorList>
    </citation>
    <scope>DISRUPTION PHENOTYPE</scope>
</reference>
<sequence>MELRALLCWASLATALEETLLNTKLETADLKWVTYPQAEGQWEELSGLDEEQHSVRTYEVCDMKRPGGQAHWLRTGWVPRRGAVHVYATIRFTMMECLSLPRASRSCKETFTVFYYESEADTATAHTPAWMENPYIKVDTVAAEHLTRKRPGAEATGKVNIKTLRLGPLSKAGFYLAFQDQGACMALLSLHLFYKKCSWLITNLTYFPETVPRELVVPVAGSCVANAVPTANPSPSLYCREDGQWAEQQVTGCSCAPGYEAAESNKVCRACGQGTFKPQIGDESCLPCPANSHSNNIGSPVCLCRIGYYRARSDPRSSPCTTPPSAPRSVVHHLNGSTLRLEWSAPLESGGREDLTYAVRCRECRPGGSCLPCGGDMTFDPGPRDLVEPWVAIRGLRPDVTYTFEVAALNGVSTLATGPPPFEPVNVTTDREVPPAVSDIRVTRSSPSSLILSWAIPRAPSGAVLDYEVKYHEKGAEGPSSVRFLKTSENRAELRGLKRGASYLVQVRARSEAGYGPFGQEHHSQTQLDESESWREQLALIAGTAVVGVVLVLVVVIIAVLCLRKQSNGREVEYSDKHGQYLIGHGTKVYIDPFTYEDPNEAVREFAKEIDVSYVKIEEVIGAGEFGEVCRGRLKAPGKKESCVAIKTLKGGYTERQRREFLSEASIMGQFEHPNIIRLEGVVTNSVPVMILTEFMENGALDSFLRLNDGQFTVIQLVGMLRGIASGMRYLAEMSYVHRDLAARNILVNSNLVCKVSDFGLSRFLEENSSDPTYTSSLGGKIPIRWTAPEAIAFRKFTSASDAWSYGIVMWEVMSFGERPYWDMSNQDVINAIEQDYRLPPPPDCPTSLHQLMLDCWQKDRNARPRFPQVVSALDKMIRNPASLKIVARENGGASHPLLDQRQPHYSAFGSVGEWLRAIKMGRYEESFAAAGFGSFEVVSQISAEDLLRIGVTLAGHQKKILASVQHMKSQAKPGAPGGTGGPAQQF</sequence>
<feature type="signal peptide" evidence="3">
    <location>
        <begin position="1"/>
        <end position="15"/>
    </location>
</feature>
<feature type="chain" id="PRO_0000016835" description="Ephrin type-B receptor 4">
    <location>
        <begin position="16"/>
        <end position="987"/>
    </location>
</feature>
<feature type="topological domain" description="Extracellular" evidence="3">
    <location>
        <begin position="16"/>
        <end position="539"/>
    </location>
</feature>
<feature type="transmembrane region" description="Helical" evidence="3">
    <location>
        <begin position="540"/>
        <end position="560"/>
    </location>
</feature>
<feature type="topological domain" description="Cytoplasmic" evidence="3">
    <location>
        <begin position="561"/>
        <end position="987"/>
    </location>
</feature>
<feature type="domain" description="Eph LBD" evidence="7">
    <location>
        <begin position="17"/>
        <end position="202"/>
    </location>
</feature>
<feature type="domain" description="Fibronectin type-III 1" evidence="6">
    <location>
        <begin position="323"/>
        <end position="432"/>
    </location>
</feature>
<feature type="domain" description="Fibronectin type-III 2" evidence="6">
    <location>
        <begin position="436"/>
        <end position="529"/>
    </location>
</feature>
<feature type="domain" description="Protein kinase" evidence="4">
    <location>
        <begin position="615"/>
        <end position="899"/>
    </location>
</feature>
<feature type="domain" description="SAM" evidence="5">
    <location>
        <begin position="907"/>
        <end position="971"/>
    </location>
</feature>
<feature type="region of interest" description="Disordered" evidence="9">
    <location>
        <begin position="965"/>
        <end position="987"/>
    </location>
</feature>
<feature type="short sequence motif" description="PDZ-binding" evidence="3">
    <location>
        <begin position="985"/>
        <end position="987"/>
    </location>
</feature>
<feature type="compositionally biased region" description="Gly residues" evidence="9">
    <location>
        <begin position="976"/>
        <end position="987"/>
    </location>
</feature>
<feature type="active site" description="Proton acceptor" evidence="4 8">
    <location>
        <position position="740"/>
    </location>
</feature>
<feature type="binding site" evidence="4">
    <location>
        <begin position="621"/>
        <end position="629"/>
    </location>
    <ligand>
        <name>ATP</name>
        <dbReference type="ChEBI" id="CHEBI:30616"/>
    </ligand>
</feature>
<feature type="binding site" evidence="4">
    <location>
        <position position="647"/>
    </location>
    <ligand>
        <name>ATP</name>
        <dbReference type="ChEBI" id="CHEBI:30616"/>
    </ligand>
</feature>
<feature type="modified residue" description="Phosphoserine" evidence="2">
    <location>
        <position position="769"/>
    </location>
</feature>
<feature type="modified residue" description="Phosphoserine" evidence="2">
    <location>
        <position position="770"/>
    </location>
</feature>
<feature type="modified residue" description="Phosphoserine" evidence="2">
    <location>
        <position position="911"/>
    </location>
</feature>
<feature type="modified residue" description="Phosphoserine" evidence="2">
    <location>
        <position position="943"/>
    </location>
</feature>
<feature type="glycosylation site" description="N-linked (GlcNAc...) asparagine" evidence="3">
    <location>
        <position position="203"/>
    </location>
</feature>
<feature type="glycosylation site" description="N-linked (GlcNAc...) asparagine" evidence="11 12">
    <location>
        <position position="335"/>
    </location>
</feature>
<feature type="glycosylation site" description="N-linked (GlcNAc...) asparagine" evidence="3">
    <location>
        <position position="426"/>
    </location>
</feature>
<feature type="disulfide bond" evidence="1">
    <location>
        <begin position="61"/>
        <end position="184"/>
    </location>
</feature>
<feature type="disulfide bond" evidence="1">
    <location>
        <begin position="97"/>
        <end position="107"/>
    </location>
</feature>
<feature type="sequence conflict" description="In Ref. 1; CAA88909 and 2; AAA18591." evidence="16" ref="1 2">
    <original>A</original>
    <variation>R</variation>
    <location>
        <position position="120"/>
    </location>
</feature>
<feature type="sequence conflict" description="In Ref. 2; AAA18591." evidence="16" ref="2">
    <original>GRE</original>
    <variation>RPR</variation>
    <location>
        <begin position="351"/>
        <end position="353"/>
    </location>
</feature>
<feature type="sequence conflict" description="In Ref. 2; AAA18591." evidence="16" ref="2">
    <original>P</original>
    <variation>R</variation>
    <location>
        <position position="389"/>
    </location>
</feature>
<feature type="sequence conflict" description="In Ref. 2; AAA18591." evidence="16" ref="2">
    <original>R</original>
    <variation>A</variation>
    <location>
        <position position="659"/>
    </location>
</feature>
<feature type="sequence conflict" description="In Ref. 1; CAA88909." evidence="16" ref="1">
    <original>P</original>
    <variation>S</variation>
    <location>
        <position position="783"/>
    </location>
</feature>
<feature type="sequence conflict" description="In Ref. 2; AAA18591." evidence="16" ref="2">
    <original>S</original>
    <variation>R</variation>
    <location>
        <position position="805"/>
    </location>
</feature>
<feature type="sequence conflict" description="In Ref. 2; AAA18591." evidence="16" ref="2">
    <original>G</original>
    <variation>V</variation>
    <location>
        <position position="913"/>
    </location>
</feature>
<feature type="sequence conflict" description="In Ref. 2; AAA18591." evidence="16" ref="2">
    <original>V</original>
    <variation>M</variation>
    <location>
        <position position="938"/>
    </location>
</feature>
<feature type="sequence conflict" description="In Ref. 2; AAA18591." evidence="16" ref="2">
    <original>SQ</original>
    <variation>WE</variation>
    <location>
        <begin position="970"/>
        <end position="971"/>
    </location>
</feature>